<evidence type="ECO:0000255" key="1">
    <source>
        <dbReference type="PROSITE-ProRule" id="PRU00111"/>
    </source>
</evidence>
<evidence type="ECO:0000269" key="2">
    <source>
    </source>
</evidence>
<gene>
    <name type="primary">lacR</name>
</gene>
<feature type="chain" id="PRO_0000107965" description="HTH-type transcriptional regulator LacR">
    <location>
        <begin position="1"/>
        <end position="335"/>
    </location>
</feature>
<feature type="domain" description="HTH lacI-type" evidence="1">
    <location>
        <begin position="1"/>
        <end position="58"/>
    </location>
</feature>
<feature type="DNA-binding region" description="H-T-H motif" evidence="1">
    <location>
        <begin position="4"/>
        <end position="23"/>
    </location>
</feature>
<sequence>MRTIKEIALESGYSPATVSRLLNNDPNLSITADTKNKILEIANKLGYWEDHQEKKIKPTIALLYRVNHNEQLQDEYFTSLKQALVSTVERDALKMKTFYDIEDLIKNASLFQGFIGVGAEPIENAQLVKLHKVLPNGVFVDTNPAPELFDSIRPNLPFTVKNAIDLFIKNGINKIGFIGGVGPKHDHIQENDLRSITFVEYMKTRGMDTKWTCVEGPVSVENGYKLGKMVLAKYKNDLPEAFLIASDTLAVGVLQAFNEENVNVPKDTKILSINNSNVVKYVSPPLSSFNINQQEMIDMALDTLTHLIIRPDRPNIDIRMNTNLVVRKSFVPQEK</sequence>
<organism>
    <name type="scientific">Lactobacillus helveticus</name>
    <name type="common">Lactobacillus suntoryeus</name>
    <dbReference type="NCBI Taxonomy" id="1587"/>
    <lineage>
        <taxon>Bacteria</taxon>
        <taxon>Bacillati</taxon>
        <taxon>Bacillota</taxon>
        <taxon>Bacilli</taxon>
        <taxon>Lactobacillales</taxon>
        <taxon>Lactobacillaceae</taxon>
        <taxon>Lactobacillus</taxon>
    </lineage>
</organism>
<keyword id="KW-0238">DNA-binding</keyword>
<keyword id="KW-0678">Repressor</keyword>
<keyword id="KW-0804">Transcription</keyword>
<keyword id="KW-0805">Transcription regulation</keyword>
<dbReference type="EMBL" id="AJ512880">
    <property type="protein sequence ID" value="CAD55503.1"/>
    <property type="molecule type" value="Genomic_DNA"/>
</dbReference>
<dbReference type="RefSeq" id="WP_003627055.1">
    <property type="nucleotide sequence ID" value="NZ_SKBC01000092.1"/>
</dbReference>
<dbReference type="SMR" id="Q7WTB0"/>
<dbReference type="eggNOG" id="COG1609">
    <property type="taxonomic scope" value="Bacteria"/>
</dbReference>
<dbReference type="UniPathway" id="UPA00542"/>
<dbReference type="GO" id="GO:0003700">
    <property type="term" value="F:DNA-binding transcription factor activity"/>
    <property type="evidence" value="ECO:0007669"/>
    <property type="project" value="TreeGrafter"/>
</dbReference>
<dbReference type="GO" id="GO:0000976">
    <property type="term" value="F:transcription cis-regulatory region binding"/>
    <property type="evidence" value="ECO:0007669"/>
    <property type="project" value="TreeGrafter"/>
</dbReference>
<dbReference type="GO" id="GO:0005990">
    <property type="term" value="P:lactose catabolic process"/>
    <property type="evidence" value="ECO:0007669"/>
    <property type="project" value="UniProtKB-UniPathway"/>
</dbReference>
<dbReference type="CDD" id="cd01392">
    <property type="entry name" value="HTH_LacI"/>
    <property type="match status" value="1"/>
</dbReference>
<dbReference type="CDD" id="cd01544">
    <property type="entry name" value="PBP1_GalR"/>
    <property type="match status" value="1"/>
</dbReference>
<dbReference type="Gene3D" id="3.40.50.2300">
    <property type="match status" value="1"/>
</dbReference>
<dbReference type="Gene3D" id="1.10.260.40">
    <property type="entry name" value="lambda repressor-like DNA-binding domains"/>
    <property type="match status" value="1"/>
</dbReference>
<dbReference type="InterPro" id="IPR000843">
    <property type="entry name" value="HTH_LacI"/>
</dbReference>
<dbReference type="InterPro" id="IPR046335">
    <property type="entry name" value="LacI/GalR-like_sensor"/>
</dbReference>
<dbReference type="InterPro" id="IPR010982">
    <property type="entry name" value="Lambda_DNA-bd_dom_sf"/>
</dbReference>
<dbReference type="InterPro" id="IPR028082">
    <property type="entry name" value="Peripla_BP_I"/>
</dbReference>
<dbReference type="PANTHER" id="PTHR30146:SF149">
    <property type="entry name" value="HTH-TYPE TRANSCRIPTIONAL REGULATOR EBGR"/>
    <property type="match status" value="1"/>
</dbReference>
<dbReference type="PANTHER" id="PTHR30146">
    <property type="entry name" value="LACI-RELATED TRANSCRIPTIONAL REPRESSOR"/>
    <property type="match status" value="1"/>
</dbReference>
<dbReference type="Pfam" id="PF00356">
    <property type="entry name" value="LacI"/>
    <property type="match status" value="1"/>
</dbReference>
<dbReference type="Pfam" id="PF13377">
    <property type="entry name" value="Peripla_BP_3"/>
    <property type="match status" value="1"/>
</dbReference>
<dbReference type="SMART" id="SM00354">
    <property type="entry name" value="HTH_LACI"/>
    <property type="match status" value="1"/>
</dbReference>
<dbReference type="SUPFAM" id="SSF47413">
    <property type="entry name" value="lambda repressor-like DNA-binding domains"/>
    <property type="match status" value="1"/>
</dbReference>
<dbReference type="SUPFAM" id="SSF53822">
    <property type="entry name" value="Periplasmic binding protein-like I"/>
    <property type="match status" value="1"/>
</dbReference>
<dbReference type="PROSITE" id="PS50932">
    <property type="entry name" value="HTH_LACI_2"/>
    <property type="match status" value="1"/>
</dbReference>
<accession>Q7WTB0</accession>
<proteinExistence type="evidence at transcript level"/>
<name>LACR_LACHE</name>
<reference key="1">
    <citation type="journal article" date="2003" name="Appl. Environ. Microbiol.">
        <title>Unusual organization for lactose and galactose gene clusters in Lactobacillus helveticus.</title>
        <authorList>
            <person name="Fortina M.G."/>
            <person name="Ricci G."/>
            <person name="Mora D."/>
            <person name="Guglielmetti S."/>
            <person name="Manachini P.L."/>
        </authorList>
    </citation>
    <scope>NUCLEOTIDE SEQUENCE [GENOMIC DNA]</scope>
    <scope>TRANSCRIPTIONAL REGULATION</scope>
    <source>
        <strain>ATCC 15009 / DSM 20075 / BCRC 12936 / JCM 1120 / NBRC 15019 / NCIMB 11971 / NRRL B-4526 / Lh12</strain>
    </source>
</reference>
<comment type="function">
    <text>Negatively regulates the transcription of the lactose utilization genes lacL and lacM.</text>
</comment>
<comment type="pathway">
    <text>Carbohydrate metabolism; lactose degradation [regulation].</text>
</comment>
<comment type="induction">
    <text evidence="2">By glucose.</text>
</comment>
<protein>
    <recommendedName>
        <fullName>HTH-type transcriptional regulator LacR</fullName>
    </recommendedName>
    <alternativeName>
        <fullName>Lactose operon repressor</fullName>
    </alternativeName>
</protein>